<comment type="function">
    <text evidence="1">Co-chaperone involved in the maturation of iron-sulfur cluster-containing proteins. Seems to help targeting proteins to be folded toward HscA.</text>
</comment>
<comment type="subunit">
    <text evidence="1">Interacts with HscA and stimulates its ATPase activity.</text>
</comment>
<comment type="similarity">
    <text evidence="1">Belongs to the HscB family.</text>
</comment>
<sequence>MAADDHFSLFGLPTRFALDPVQLEQAWRAVAARVHPDRYATASAAERRVAMQWAARANEAYRQLRDPMLRARYLCEQAGVDLQTESNTAMDPAFLMQQMEWREMLDDARRDPAAFAALRAELEQARLRMQQTLSELIDERGDYQQAGTKVREWMFVEKLAQELSAAQPMQ</sequence>
<keyword id="KW-0143">Chaperone</keyword>
<keyword id="KW-1185">Reference proteome</keyword>
<accession>Q7VXG8</accession>
<reference key="1">
    <citation type="journal article" date="2003" name="Nat. Genet.">
        <title>Comparative analysis of the genome sequences of Bordetella pertussis, Bordetella parapertussis and Bordetella bronchiseptica.</title>
        <authorList>
            <person name="Parkhill J."/>
            <person name="Sebaihia M."/>
            <person name="Preston A."/>
            <person name="Murphy L.D."/>
            <person name="Thomson N.R."/>
            <person name="Harris D.E."/>
            <person name="Holden M.T.G."/>
            <person name="Churcher C.M."/>
            <person name="Bentley S.D."/>
            <person name="Mungall K.L."/>
            <person name="Cerdeno-Tarraga A.-M."/>
            <person name="Temple L."/>
            <person name="James K.D."/>
            <person name="Harris B."/>
            <person name="Quail M.A."/>
            <person name="Achtman M."/>
            <person name="Atkin R."/>
            <person name="Baker S."/>
            <person name="Basham D."/>
            <person name="Bason N."/>
            <person name="Cherevach I."/>
            <person name="Chillingworth T."/>
            <person name="Collins M."/>
            <person name="Cronin A."/>
            <person name="Davis P."/>
            <person name="Doggett J."/>
            <person name="Feltwell T."/>
            <person name="Goble A."/>
            <person name="Hamlin N."/>
            <person name="Hauser H."/>
            <person name="Holroyd S."/>
            <person name="Jagels K."/>
            <person name="Leather S."/>
            <person name="Moule S."/>
            <person name="Norberczak H."/>
            <person name="O'Neil S."/>
            <person name="Ormond D."/>
            <person name="Price C."/>
            <person name="Rabbinowitsch E."/>
            <person name="Rutter S."/>
            <person name="Sanders M."/>
            <person name="Saunders D."/>
            <person name="Seeger K."/>
            <person name="Sharp S."/>
            <person name="Simmonds M."/>
            <person name="Skelton J."/>
            <person name="Squares R."/>
            <person name="Squares S."/>
            <person name="Stevens K."/>
            <person name="Unwin L."/>
            <person name="Whitehead S."/>
            <person name="Barrell B.G."/>
            <person name="Maskell D.J."/>
        </authorList>
    </citation>
    <scope>NUCLEOTIDE SEQUENCE [LARGE SCALE GENOMIC DNA]</scope>
    <source>
        <strain>Tohama I / ATCC BAA-589 / NCTC 13251</strain>
    </source>
</reference>
<proteinExistence type="inferred from homology"/>
<dbReference type="EMBL" id="BX640416">
    <property type="protein sequence ID" value="CAE42088.1"/>
    <property type="molecule type" value="Genomic_DNA"/>
</dbReference>
<dbReference type="RefSeq" id="NP_880508.1">
    <property type="nucleotide sequence ID" value="NC_002929.2"/>
</dbReference>
<dbReference type="RefSeq" id="WP_003812456.1">
    <property type="nucleotide sequence ID" value="NZ_CP039022.1"/>
</dbReference>
<dbReference type="SMR" id="Q7VXG8"/>
<dbReference type="STRING" id="257313.BP1802"/>
<dbReference type="PaxDb" id="257313-BP1802"/>
<dbReference type="GeneID" id="69602021"/>
<dbReference type="KEGG" id="bpe:BP1802"/>
<dbReference type="PATRIC" id="fig|257313.5.peg.1935"/>
<dbReference type="eggNOG" id="COG1076">
    <property type="taxonomic scope" value="Bacteria"/>
</dbReference>
<dbReference type="HOGENOM" id="CLU_068529_2_1_4"/>
<dbReference type="Proteomes" id="UP000002676">
    <property type="component" value="Chromosome"/>
</dbReference>
<dbReference type="GO" id="GO:1990230">
    <property type="term" value="C:iron-sulfur cluster transfer complex"/>
    <property type="evidence" value="ECO:0007669"/>
    <property type="project" value="TreeGrafter"/>
</dbReference>
<dbReference type="GO" id="GO:0001671">
    <property type="term" value="F:ATPase activator activity"/>
    <property type="evidence" value="ECO:0007669"/>
    <property type="project" value="InterPro"/>
</dbReference>
<dbReference type="GO" id="GO:0051087">
    <property type="term" value="F:protein-folding chaperone binding"/>
    <property type="evidence" value="ECO:0007669"/>
    <property type="project" value="InterPro"/>
</dbReference>
<dbReference type="GO" id="GO:0044571">
    <property type="term" value="P:[2Fe-2S] cluster assembly"/>
    <property type="evidence" value="ECO:0007669"/>
    <property type="project" value="InterPro"/>
</dbReference>
<dbReference type="GO" id="GO:0051259">
    <property type="term" value="P:protein complex oligomerization"/>
    <property type="evidence" value="ECO:0007669"/>
    <property type="project" value="InterPro"/>
</dbReference>
<dbReference type="GO" id="GO:0006457">
    <property type="term" value="P:protein folding"/>
    <property type="evidence" value="ECO:0007669"/>
    <property type="project" value="UniProtKB-UniRule"/>
</dbReference>
<dbReference type="CDD" id="cd06257">
    <property type="entry name" value="DnaJ"/>
    <property type="match status" value="1"/>
</dbReference>
<dbReference type="Gene3D" id="1.10.287.110">
    <property type="entry name" value="DnaJ domain"/>
    <property type="match status" value="1"/>
</dbReference>
<dbReference type="Gene3D" id="1.20.1280.20">
    <property type="entry name" value="HscB, C-terminal domain"/>
    <property type="match status" value="1"/>
</dbReference>
<dbReference type="HAMAP" id="MF_00682">
    <property type="entry name" value="HscB"/>
    <property type="match status" value="1"/>
</dbReference>
<dbReference type="InterPro" id="IPR001623">
    <property type="entry name" value="DnaJ_domain"/>
</dbReference>
<dbReference type="InterPro" id="IPR004640">
    <property type="entry name" value="HscB"/>
</dbReference>
<dbReference type="InterPro" id="IPR036386">
    <property type="entry name" value="HscB_C_sf"/>
</dbReference>
<dbReference type="InterPro" id="IPR009073">
    <property type="entry name" value="HscB_oligo_C"/>
</dbReference>
<dbReference type="InterPro" id="IPR036869">
    <property type="entry name" value="J_dom_sf"/>
</dbReference>
<dbReference type="NCBIfam" id="TIGR00714">
    <property type="entry name" value="hscB"/>
    <property type="match status" value="1"/>
</dbReference>
<dbReference type="NCBIfam" id="NF002935">
    <property type="entry name" value="PRK03578.1"/>
    <property type="match status" value="1"/>
</dbReference>
<dbReference type="PANTHER" id="PTHR14021">
    <property type="entry name" value="IRON-SULFUR CLUSTER CO-CHAPERONE PROTEIN HSCB"/>
    <property type="match status" value="1"/>
</dbReference>
<dbReference type="PANTHER" id="PTHR14021:SF15">
    <property type="entry name" value="IRON-SULFUR CLUSTER CO-CHAPERONE PROTEIN HSCB"/>
    <property type="match status" value="1"/>
</dbReference>
<dbReference type="Pfam" id="PF07743">
    <property type="entry name" value="HSCB_C"/>
    <property type="match status" value="1"/>
</dbReference>
<dbReference type="SMART" id="SM00271">
    <property type="entry name" value="DnaJ"/>
    <property type="match status" value="1"/>
</dbReference>
<dbReference type="SUPFAM" id="SSF46565">
    <property type="entry name" value="Chaperone J-domain"/>
    <property type="match status" value="1"/>
</dbReference>
<dbReference type="SUPFAM" id="SSF47144">
    <property type="entry name" value="HSC20 (HSCB), C-terminal oligomerisation domain"/>
    <property type="match status" value="1"/>
</dbReference>
<dbReference type="PROSITE" id="PS50076">
    <property type="entry name" value="DNAJ_2"/>
    <property type="match status" value="1"/>
</dbReference>
<evidence type="ECO:0000255" key="1">
    <source>
        <dbReference type="HAMAP-Rule" id="MF_00682"/>
    </source>
</evidence>
<name>HSCB_BORPE</name>
<gene>
    <name evidence="1" type="primary">hscB</name>
    <name type="ordered locus">BP1802</name>
</gene>
<protein>
    <recommendedName>
        <fullName evidence="1">Co-chaperone protein HscB homolog</fullName>
    </recommendedName>
</protein>
<feature type="chain" id="PRO_0000070959" description="Co-chaperone protein HscB homolog">
    <location>
        <begin position="1"/>
        <end position="170"/>
    </location>
</feature>
<feature type="domain" description="J" evidence="1">
    <location>
        <begin position="5"/>
        <end position="79"/>
    </location>
</feature>
<organism>
    <name type="scientific">Bordetella pertussis (strain Tohama I / ATCC BAA-589 / NCTC 13251)</name>
    <dbReference type="NCBI Taxonomy" id="257313"/>
    <lineage>
        <taxon>Bacteria</taxon>
        <taxon>Pseudomonadati</taxon>
        <taxon>Pseudomonadota</taxon>
        <taxon>Betaproteobacteria</taxon>
        <taxon>Burkholderiales</taxon>
        <taxon>Alcaligenaceae</taxon>
        <taxon>Bordetella</taxon>
    </lineage>
</organism>